<gene>
    <name type="primary">motD</name>
</gene>
<sequence length="475" mass="48842">MRPLDENLRTSAASRPAQSLSVRGQPEAESGAFGEAIADAGRRRTQGQGGRTSADDPRRDSVANGGNASAVPKADGFGADVPASMADAASPDARPASERAITTRDQAAKRLQHGHPAGTTPLSLGRDGAGEETAEPVEPAAAHSRETVHALRDAIDEASGMTATEGDENAEPVGGTVSDLLSMLTGAAPAVAAALQPEGRAKPASAVRDGSDGPAKAVGGISPDVADGAHPQTGDGTGGSEPDRLFRFARADGKGQVVSMSISRDGERAVVENSRSSVKPGVETVTVLEARRYLGLAVNENATSVTTAIAGDSGWAEALQSSAATTKPEAWSQAGKTLNTLKIQMHPVDLGMVTATLRLKDDELQVDLKVETGEAFRQLRDDQSEMVKALRAQGFAVDQVNIVFNGGGDSASGGGGQSQAQAQLGYEGRERAGDDGQGRQPRDGGRAATERWAGNDATDDVPDGAERSRAGHVYM</sequence>
<name>MOTD_RHIML</name>
<feature type="chain" id="PRO_0000096542" description="Chemotaxis protein MotD">
    <location>
        <begin position="1"/>
        <end position="475"/>
    </location>
</feature>
<feature type="region of interest" description="Disordered" evidence="1">
    <location>
        <begin position="1"/>
        <end position="175"/>
    </location>
</feature>
<feature type="region of interest" description="Disordered" evidence="1">
    <location>
        <begin position="195"/>
        <end position="243"/>
    </location>
</feature>
<feature type="region of interest" description="Disordered" evidence="1">
    <location>
        <begin position="408"/>
        <end position="475"/>
    </location>
</feature>
<feature type="compositionally biased region" description="Polar residues" evidence="1">
    <location>
        <begin position="9"/>
        <end position="22"/>
    </location>
</feature>
<feature type="compositionally biased region" description="Low complexity" evidence="1">
    <location>
        <begin position="79"/>
        <end position="100"/>
    </location>
</feature>
<feature type="compositionally biased region" description="Basic and acidic residues" evidence="1">
    <location>
        <begin position="143"/>
        <end position="155"/>
    </location>
</feature>
<feature type="compositionally biased region" description="Gly residues" evidence="1">
    <location>
        <begin position="408"/>
        <end position="417"/>
    </location>
</feature>
<feature type="compositionally biased region" description="Basic and acidic residues" evidence="1">
    <location>
        <begin position="427"/>
        <end position="449"/>
    </location>
</feature>
<evidence type="ECO:0000256" key="1">
    <source>
        <dbReference type="SAM" id="MobiDB-lite"/>
    </source>
</evidence>
<evidence type="ECO:0000305" key="2"/>
<keyword id="KW-0145">Chemotaxis</keyword>
<keyword id="KW-0963">Cytoplasm</keyword>
<keyword id="KW-0283">Flagellar rotation</keyword>
<dbReference type="EMBL" id="L49337">
    <property type="protein sequence ID" value="AAB81410.1"/>
    <property type="molecule type" value="Genomic_DNA"/>
</dbReference>
<dbReference type="RefSeq" id="WP_014529018.1">
    <property type="nucleotide sequence ID" value="NZ_WISY01000012.1"/>
</dbReference>
<dbReference type="STRING" id="382.DU99_03455"/>
<dbReference type="GO" id="GO:0005737">
    <property type="term" value="C:cytoplasm"/>
    <property type="evidence" value="ECO:0007669"/>
    <property type="project" value="UniProtKB-SubCell"/>
</dbReference>
<dbReference type="GO" id="GO:0097588">
    <property type="term" value="P:archaeal or bacterial-type flagellum-dependent cell motility"/>
    <property type="evidence" value="ECO:0007669"/>
    <property type="project" value="UniProtKB-KW"/>
</dbReference>
<dbReference type="GO" id="GO:0006935">
    <property type="term" value="P:chemotaxis"/>
    <property type="evidence" value="ECO:0007669"/>
    <property type="project" value="UniProtKB-KW"/>
</dbReference>
<dbReference type="CDD" id="cd17470">
    <property type="entry name" value="T3SS_Flik_C"/>
    <property type="match status" value="1"/>
</dbReference>
<dbReference type="Gene3D" id="3.30.750.140">
    <property type="match status" value="1"/>
</dbReference>
<dbReference type="InterPro" id="IPR021136">
    <property type="entry name" value="Flagellar_hook_control-like_C"/>
</dbReference>
<dbReference type="InterPro" id="IPR038610">
    <property type="entry name" value="FliK-like_C_sf"/>
</dbReference>
<dbReference type="Pfam" id="PF02120">
    <property type="entry name" value="Flg_hook"/>
    <property type="match status" value="1"/>
</dbReference>
<accession>Q52964</accession>
<protein>
    <recommendedName>
        <fullName>Chemotaxis protein MotD</fullName>
    </recommendedName>
    <alternativeName>
        <fullName>Motility protein D</fullName>
    </alternativeName>
</protein>
<reference key="1">
    <citation type="journal article" date="1997" name="J. Bacteriol.">
        <title>Three genes of a motility operon and their role in flagellar rotary speed variation in Rhizobium meliloti.</title>
        <authorList>
            <person name="Platzer J."/>
            <person name="Sterr W."/>
            <person name="Hausmann M."/>
            <person name="Schmitt R."/>
        </authorList>
    </citation>
    <scope>NUCLEOTIDE SEQUENCE [GENOMIC DNA]</scope>
    <source>
        <strain>RU11/001</strain>
    </source>
</reference>
<proteinExistence type="predicted"/>
<comment type="function">
    <text>Required for the rotation of the flagellar motor. Has a positive effect as flagellar rotation increases when an excess of motd is present.</text>
</comment>
<comment type="subcellular location">
    <subcellularLocation>
        <location>Cytoplasm</location>
    </subcellularLocation>
    <text evidence="2">Associated with the inner surface of the motor.</text>
</comment>
<organism>
    <name type="scientific">Rhizobium meliloti</name>
    <name type="common">Ensifer meliloti</name>
    <name type="synonym">Sinorhizobium meliloti</name>
    <dbReference type="NCBI Taxonomy" id="382"/>
    <lineage>
        <taxon>Bacteria</taxon>
        <taxon>Pseudomonadati</taxon>
        <taxon>Pseudomonadota</taxon>
        <taxon>Alphaproteobacteria</taxon>
        <taxon>Hyphomicrobiales</taxon>
        <taxon>Rhizobiaceae</taxon>
        <taxon>Sinorhizobium/Ensifer group</taxon>
        <taxon>Sinorhizobium</taxon>
    </lineage>
</organism>